<gene>
    <name evidence="1" type="primary">rsmA</name>
    <name evidence="1" type="synonym">ksgA</name>
    <name type="ordered locus">HPG27_1352</name>
</gene>
<accession>B5Z950</accession>
<comment type="function">
    <text evidence="1">Specifically dimethylates two adjacent adenosines (A1518 and A1519) in the loop of a conserved hairpin near the 3'-end of 16S rRNA in the 30S particle. May play a critical role in biogenesis of 30S subunits.</text>
</comment>
<comment type="catalytic activity">
    <reaction evidence="1">
        <text>adenosine(1518)/adenosine(1519) in 16S rRNA + 4 S-adenosyl-L-methionine = N(6)-dimethyladenosine(1518)/N(6)-dimethyladenosine(1519) in 16S rRNA + 4 S-adenosyl-L-homocysteine + 4 H(+)</text>
        <dbReference type="Rhea" id="RHEA:19609"/>
        <dbReference type="Rhea" id="RHEA-COMP:10232"/>
        <dbReference type="Rhea" id="RHEA-COMP:10233"/>
        <dbReference type="ChEBI" id="CHEBI:15378"/>
        <dbReference type="ChEBI" id="CHEBI:57856"/>
        <dbReference type="ChEBI" id="CHEBI:59789"/>
        <dbReference type="ChEBI" id="CHEBI:74411"/>
        <dbReference type="ChEBI" id="CHEBI:74493"/>
        <dbReference type="EC" id="2.1.1.182"/>
    </reaction>
</comment>
<comment type="subcellular location">
    <subcellularLocation>
        <location evidence="1">Cytoplasm</location>
    </subcellularLocation>
</comment>
<comment type="similarity">
    <text evidence="1">Belongs to the class I-like SAM-binding methyltransferase superfamily. rRNA adenine N(6)-methyltransferase family. RsmA subfamily.</text>
</comment>
<evidence type="ECO:0000255" key="1">
    <source>
        <dbReference type="HAMAP-Rule" id="MF_00607"/>
    </source>
</evidence>
<protein>
    <recommendedName>
        <fullName evidence="1">Ribosomal RNA small subunit methyltransferase A</fullName>
        <ecNumber evidence="1">2.1.1.182</ecNumber>
    </recommendedName>
    <alternativeName>
        <fullName evidence="1">16S rRNA (adenine(1518)-N(6)/adenine(1519)-N(6))-dimethyltransferase</fullName>
    </alternativeName>
    <alternativeName>
        <fullName evidence="1">16S rRNA dimethyladenosine transferase</fullName>
    </alternativeName>
    <alternativeName>
        <fullName evidence="1">16S rRNA dimethylase</fullName>
    </alternativeName>
    <alternativeName>
        <fullName evidence="1">S-adenosylmethionine-6-N', N'-adenosyl(rRNA) dimethyltransferase</fullName>
    </alternativeName>
</protein>
<keyword id="KW-0963">Cytoplasm</keyword>
<keyword id="KW-0489">Methyltransferase</keyword>
<keyword id="KW-1185">Reference proteome</keyword>
<keyword id="KW-0694">RNA-binding</keyword>
<keyword id="KW-0698">rRNA processing</keyword>
<keyword id="KW-0949">S-adenosyl-L-methionine</keyword>
<keyword id="KW-0808">Transferase</keyword>
<proteinExistence type="inferred from homology"/>
<name>RSMA_HELPG</name>
<reference key="1">
    <citation type="journal article" date="2009" name="J. Bacteriol.">
        <title>The complete genome sequence of Helicobacter pylori strain G27.</title>
        <authorList>
            <person name="Baltrus D.A."/>
            <person name="Amieva M.R."/>
            <person name="Covacci A."/>
            <person name="Lowe T.M."/>
            <person name="Merrell D.S."/>
            <person name="Ottemann K.M."/>
            <person name="Stein M."/>
            <person name="Salama N.R."/>
            <person name="Guillemin K."/>
        </authorList>
    </citation>
    <scope>NUCLEOTIDE SEQUENCE [LARGE SCALE GENOMIC DNA]</scope>
    <source>
        <strain>G27</strain>
    </source>
</reference>
<dbReference type="EC" id="2.1.1.182" evidence="1"/>
<dbReference type="EMBL" id="CP001173">
    <property type="protein sequence ID" value="ACI28099.1"/>
    <property type="molecule type" value="Genomic_DNA"/>
</dbReference>
<dbReference type="RefSeq" id="WP_000259424.1">
    <property type="nucleotide sequence ID" value="NC_011333.1"/>
</dbReference>
<dbReference type="SMR" id="B5Z950"/>
<dbReference type="KEGG" id="hpg:HPG27_1352"/>
<dbReference type="HOGENOM" id="CLU_041220_0_2_7"/>
<dbReference type="Proteomes" id="UP000001735">
    <property type="component" value="Chromosome"/>
</dbReference>
<dbReference type="GO" id="GO:0005829">
    <property type="term" value="C:cytosol"/>
    <property type="evidence" value="ECO:0007669"/>
    <property type="project" value="TreeGrafter"/>
</dbReference>
<dbReference type="GO" id="GO:0052908">
    <property type="term" value="F:16S rRNA (adenine(1518)-N(6)/adenine(1519)-N(6))-dimethyltransferase activity"/>
    <property type="evidence" value="ECO:0007669"/>
    <property type="project" value="UniProtKB-EC"/>
</dbReference>
<dbReference type="GO" id="GO:0003723">
    <property type="term" value="F:RNA binding"/>
    <property type="evidence" value="ECO:0007669"/>
    <property type="project" value="UniProtKB-KW"/>
</dbReference>
<dbReference type="FunFam" id="3.40.50.150:FF:000456">
    <property type="entry name" value="Ribosomal RNA small subunit methyltransferase A"/>
    <property type="match status" value="1"/>
</dbReference>
<dbReference type="Gene3D" id="1.10.8.100">
    <property type="entry name" value="Ribosomal RNA adenine dimethylase-like, domain 2"/>
    <property type="match status" value="1"/>
</dbReference>
<dbReference type="Gene3D" id="3.40.50.150">
    <property type="entry name" value="Vaccinia Virus protein VP39"/>
    <property type="match status" value="1"/>
</dbReference>
<dbReference type="HAMAP" id="MF_00607">
    <property type="entry name" value="16SrRNA_methyltr_A"/>
    <property type="match status" value="1"/>
</dbReference>
<dbReference type="InterPro" id="IPR001737">
    <property type="entry name" value="KsgA/Erm"/>
</dbReference>
<dbReference type="InterPro" id="IPR023165">
    <property type="entry name" value="rRNA_Ade_diMease-like_C"/>
</dbReference>
<dbReference type="InterPro" id="IPR020596">
    <property type="entry name" value="rRNA_Ade_Mease_Trfase_CS"/>
</dbReference>
<dbReference type="InterPro" id="IPR020598">
    <property type="entry name" value="rRNA_Ade_methylase_Trfase_N"/>
</dbReference>
<dbReference type="InterPro" id="IPR011530">
    <property type="entry name" value="rRNA_adenine_dimethylase"/>
</dbReference>
<dbReference type="InterPro" id="IPR029063">
    <property type="entry name" value="SAM-dependent_MTases_sf"/>
</dbReference>
<dbReference type="NCBIfam" id="TIGR00755">
    <property type="entry name" value="ksgA"/>
    <property type="match status" value="1"/>
</dbReference>
<dbReference type="PANTHER" id="PTHR11727">
    <property type="entry name" value="DIMETHYLADENOSINE TRANSFERASE"/>
    <property type="match status" value="1"/>
</dbReference>
<dbReference type="PANTHER" id="PTHR11727:SF7">
    <property type="entry name" value="DIMETHYLADENOSINE TRANSFERASE-RELATED"/>
    <property type="match status" value="1"/>
</dbReference>
<dbReference type="Pfam" id="PF00398">
    <property type="entry name" value="RrnaAD"/>
    <property type="match status" value="1"/>
</dbReference>
<dbReference type="SMART" id="SM00650">
    <property type="entry name" value="rADc"/>
    <property type="match status" value="1"/>
</dbReference>
<dbReference type="SUPFAM" id="SSF53335">
    <property type="entry name" value="S-adenosyl-L-methionine-dependent methyltransferases"/>
    <property type="match status" value="1"/>
</dbReference>
<dbReference type="PROSITE" id="PS01131">
    <property type="entry name" value="RRNA_A_DIMETH"/>
    <property type="match status" value="1"/>
</dbReference>
<dbReference type="PROSITE" id="PS51689">
    <property type="entry name" value="SAM_RNA_A_N6_MT"/>
    <property type="match status" value="1"/>
</dbReference>
<organism>
    <name type="scientific">Helicobacter pylori (strain G27)</name>
    <dbReference type="NCBI Taxonomy" id="563041"/>
    <lineage>
        <taxon>Bacteria</taxon>
        <taxon>Pseudomonadati</taxon>
        <taxon>Campylobacterota</taxon>
        <taxon>Epsilonproteobacteria</taxon>
        <taxon>Campylobacterales</taxon>
        <taxon>Helicobacteraceae</taxon>
        <taxon>Helicobacter</taxon>
    </lineage>
</organism>
<feature type="chain" id="PRO_1000130282" description="Ribosomal RNA small subunit methyltransferase A">
    <location>
        <begin position="1"/>
        <end position="271"/>
    </location>
</feature>
<feature type="binding site" evidence="1">
    <location>
        <position position="11"/>
    </location>
    <ligand>
        <name>S-adenosyl-L-methionine</name>
        <dbReference type="ChEBI" id="CHEBI:59789"/>
    </ligand>
</feature>
<feature type="binding site" evidence="1">
    <location>
        <position position="13"/>
    </location>
    <ligand>
        <name>S-adenosyl-L-methionine</name>
        <dbReference type="ChEBI" id="CHEBI:59789"/>
    </ligand>
</feature>
<feature type="binding site" evidence="1">
    <location>
        <position position="38"/>
    </location>
    <ligand>
        <name>S-adenosyl-L-methionine</name>
        <dbReference type="ChEBI" id="CHEBI:59789"/>
    </ligand>
</feature>
<feature type="binding site" evidence="1">
    <location>
        <position position="58"/>
    </location>
    <ligand>
        <name>S-adenosyl-L-methionine</name>
        <dbReference type="ChEBI" id="CHEBI:59789"/>
    </ligand>
</feature>
<feature type="binding site" evidence="1">
    <location>
        <position position="86"/>
    </location>
    <ligand>
        <name>S-adenosyl-L-methionine</name>
        <dbReference type="ChEBI" id="CHEBI:59789"/>
    </ligand>
</feature>
<feature type="binding site" evidence="1">
    <location>
        <position position="101"/>
    </location>
    <ligand>
        <name>S-adenosyl-L-methionine</name>
        <dbReference type="ChEBI" id="CHEBI:59789"/>
    </ligand>
</feature>
<sequence length="271" mass="30698">MVVAKKSLGQHFLTDESFLDRIVNALPPLNPLKLIEIGVGLGDLTLKLLDRYPLKTYEIDSNLCEKMRARLKAQKKPFQLELVEKDALFLKEEEPYFLISNLPYYIATRLVLNALKDPKCRGLLVMTQKEVALKFCTKDSQNALSVLVHTIGNATLLFDVPPSAFSPPPKVFSSVFEVIKEPLKEKALASLLQAPFFEEALQKGFETLEDFLKACFSSPRKTLSNNLKKSVSYREKLDKVLDFLALENQPTSVRASEIKDYLKLLEYLLKG</sequence>